<reference key="1">
    <citation type="journal article" date="1996" name="DNA Res.">
        <title>A 460-kb DNA sequence of the Escherichia coli K-12 genome corresponding to the 40.1-50.0 min region on the linkage map.</title>
        <authorList>
            <person name="Itoh T."/>
            <person name="Aiba H."/>
            <person name="Baba T."/>
            <person name="Fujita K."/>
            <person name="Hayashi K."/>
            <person name="Inada T."/>
            <person name="Isono K."/>
            <person name="Kasai H."/>
            <person name="Kimura S."/>
            <person name="Kitakawa M."/>
            <person name="Kitagawa M."/>
            <person name="Makino K."/>
            <person name="Miki T."/>
            <person name="Mizobuchi K."/>
            <person name="Mori H."/>
            <person name="Mori T."/>
            <person name="Motomura K."/>
            <person name="Nakade S."/>
            <person name="Nakamura Y."/>
            <person name="Nashimoto H."/>
            <person name="Nishio Y."/>
            <person name="Oshima T."/>
            <person name="Saito N."/>
            <person name="Sampei G."/>
            <person name="Seki Y."/>
            <person name="Sivasundaram S."/>
            <person name="Tagami H."/>
            <person name="Takeda J."/>
            <person name="Takemoto K."/>
            <person name="Wada C."/>
            <person name="Yamamoto Y."/>
            <person name="Horiuchi T."/>
        </authorList>
    </citation>
    <scope>NUCLEOTIDE SEQUENCE [LARGE SCALE GENOMIC DNA]</scope>
    <source>
        <strain>K12 / W3110 / ATCC 27325 / DSM 5911</strain>
    </source>
</reference>
<reference key="2">
    <citation type="journal article" date="1997" name="Science">
        <title>The complete genome sequence of Escherichia coli K-12.</title>
        <authorList>
            <person name="Blattner F.R."/>
            <person name="Plunkett G. III"/>
            <person name="Bloch C.A."/>
            <person name="Perna N.T."/>
            <person name="Burland V."/>
            <person name="Riley M."/>
            <person name="Collado-Vides J."/>
            <person name="Glasner J.D."/>
            <person name="Rode C.K."/>
            <person name="Mayhew G.F."/>
            <person name="Gregor J."/>
            <person name="Davis N.W."/>
            <person name="Kirkpatrick H.A."/>
            <person name="Goeden M.A."/>
            <person name="Rose D.J."/>
            <person name="Mau B."/>
            <person name="Shao Y."/>
        </authorList>
    </citation>
    <scope>NUCLEOTIDE SEQUENCE [LARGE SCALE GENOMIC DNA]</scope>
    <source>
        <strain>K12 / MG1655 / ATCC 47076</strain>
    </source>
</reference>
<reference key="3">
    <citation type="journal article" date="2006" name="Mol. Syst. Biol.">
        <title>Highly accurate genome sequences of Escherichia coli K-12 strains MG1655 and W3110.</title>
        <authorList>
            <person name="Hayashi K."/>
            <person name="Morooka N."/>
            <person name="Yamamoto Y."/>
            <person name="Fujita K."/>
            <person name="Isono K."/>
            <person name="Choi S."/>
            <person name="Ohtsubo E."/>
            <person name="Baba T."/>
            <person name="Wanner B.L."/>
            <person name="Mori H."/>
            <person name="Horiuchi T."/>
        </authorList>
    </citation>
    <scope>NUCLEOTIDE SEQUENCE [LARGE SCALE GENOMIC DNA]</scope>
    <source>
        <strain>K12 / W3110 / ATCC 27325 / DSM 5911</strain>
    </source>
</reference>
<reference key="4">
    <citation type="journal article" date="2006" name="Mol. Microbiol.">
        <title>Cyclic-di-GMP-mediated signalling within the sigma network of Escherichia coli.</title>
        <authorList>
            <person name="Weber H."/>
            <person name="Pesavento C."/>
            <person name="Possling A."/>
            <person name="Tischendorf G."/>
            <person name="Hengge R."/>
        </authorList>
    </citation>
    <scope>INDUCTION</scope>
    <scope>RPOS-DEPENDENCE</scope>
    <source>
        <strain>K12 / MC4100</strain>
    </source>
</reference>
<reference key="5">
    <citation type="journal article" date="2005" name="Science">
        <title>Global topology analysis of the Escherichia coli inner membrane proteome.</title>
        <authorList>
            <person name="Daley D.O."/>
            <person name="Rapp M."/>
            <person name="Granseth E."/>
            <person name="Melen K."/>
            <person name="Drew D."/>
            <person name="von Heijne G."/>
        </authorList>
    </citation>
    <scope>TOPOLOGY [LARGE SCALE ANALYSIS]</scope>
    <scope>SUBCELLULAR LOCATION</scope>
    <source>
        <strain>K12 / MG1655 / ATCC 47076</strain>
    </source>
</reference>
<reference key="6">
    <citation type="journal article" date="2011" name="Appl. Microbiol. Biotechnol.">
        <title>GGDEF proteins YeaI, YedQ, and YfiN reduce early biofilm formation and swimming motility in Escherichia coli.</title>
        <authorList>
            <person name="Sanchez-Torres V."/>
            <person name="Hu H."/>
            <person name="Wood T.K."/>
        </authorList>
    </citation>
    <scope>DISRUPTION PHENOTYPE</scope>
    <scope>MUTAGENESIS OF GLU-407</scope>
</reference>
<reference key="7">
    <citation type="journal article" date="2015" name="J. Bacteriol.">
        <title>Systematic nomenclature for GGDEF and EAL domain-containing cyclic di-GMP turnover proteins of Escherichia coli.</title>
        <authorList>
            <person name="Hengge R."/>
            <person name="Galperin M.Y."/>
            <person name="Ghigo J.M."/>
            <person name="Gomelsky M."/>
            <person name="Green J."/>
            <person name="Hughes K.T."/>
            <person name="Jenal U."/>
            <person name="Landini P."/>
        </authorList>
    </citation>
    <scope>NOMENCLATURE</scope>
</reference>
<proteinExistence type="evidence at protein level"/>
<gene>
    <name evidence="7" type="primary">cdgI</name>
    <name type="synonym">yeaI</name>
    <name type="ordered locus">b1785</name>
    <name type="ordered locus">JW1774</name>
</gene>
<protein>
    <recommendedName>
        <fullName evidence="8">Probable diguanylate cyclase CdgI</fullName>
        <shortName evidence="8">DGC</shortName>
        <ecNumber evidence="1">2.7.7.65</ecNumber>
    </recommendedName>
</protein>
<sequence length="491" mass="56101">MIQSTRISMGLFFKYFLSLTKIDPGQNYISLPSIKSSTHIALLFMVSMGTQKLKAQSFFIFSLLLTLILFCITTLYNENTNVKLIPQMNYLMVVVALFFLNAVIFLFMLMKYFTNKQILPTLILSLAFLSGLIYLVETIVIIHKPINGSTLIQTKSNDVSIFYIFRQLSFICLTSLALFCYGKDNILDNNKKKTGILLLALIPFLVFPLLAHNLSSYNADYSLYVVDYCPDNHTATWGINYTKILVCLWAFLLFFIIMRTRLASELWPLIALLCLASLCCNLLLLTLDEYNYTIWYISRGIEVSSKLFVVSFLIYNIFQELQLSSKLAVHDVLTNIYNRRYFFNSVESLLSRPVVKDFCVMLVDINQFKRINAQWGHRVGDKVLVSIVDIIQQSIRPDDILARLEGEVFGLLFTELNSAQAKIIAERMRKNVELLTGFSNRYDVPEQMTISIGTVFSTGDTRNISLVMTEADKALREAKSEGGNKVIIHHI</sequence>
<keyword id="KW-0997">Cell inner membrane</keyword>
<keyword id="KW-1003">Cell membrane</keyword>
<keyword id="KW-0342">GTP-binding</keyword>
<keyword id="KW-0460">Magnesium</keyword>
<keyword id="KW-0472">Membrane</keyword>
<keyword id="KW-0479">Metal-binding</keyword>
<keyword id="KW-0547">Nucleotide-binding</keyword>
<keyword id="KW-1185">Reference proteome</keyword>
<keyword id="KW-0808">Transferase</keyword>
<keyword id="KW-0812">Transmembrane</keyword>
<keyword id="KW-1133">Transmembrane helix</keyword>
<evidence type="ECO:0000250" key="1">
    <source>
        <dbReference type="UniProtKB" id="P31129"/>
    </source>
</evidence>
<evidence type="ECO:0000255" key="2"/>
<evidence type="ECO:0000255" key="3">
    <source>
        <dbReference type="PROSITE-ProRule" id="PRU00095"/>
    </source>
</evidence>
<evidence type="ECO:0000269" key="4">
    <source>
    </source>
</evidence>
<evidence type="ECO:0000269" key="5">
    <source>
    </source>
</evidence>
<evidence type="ECO:0000269" key="6">
    <source>
    </source>
</evidence>
<evidence type="ECO:0000303" key="7">
    <source>
    </source>
</evidence>
<evidence type="ECO:0000305" key="8"/>
<evidence type="ECO:0000305" key="9">
    <source>
    </source>
</evidence>
<accession>P76236</accession>
<comment type="function">
    <text evidence="1">Catalyzes the synthesis of cyclic-di-GMP (c-di-GMP) via the condensation of 2 GTP molecules.</text>
</comment>
<comment type="catalytic activity">
    <reaction evidence="1">
        <text>2 GTP = 3',3'-c-di-GMP + 2 diphosphate</text>
        <dbReference type="Rhea" id="RHEA:24898"/>
        <dbReference type="ChEBI" id="CHEBI:33019"/>
        <dbReference type="ChEBI" id="CHEBI:37565"/>
        <dbReference type="ChEBI" id="CHEBI:58805"/>
        <dbReference type="EC" id="2.7.7.65"/>
    </reaction>
</comment>
<comment type="cofactor">
    <cofactor evidence="1">
        <name>Mg(2+)</name>
        <dbReference type="ChEBI" id="CHEBI:18420"/>
    </cofactor>
    <text evidence="1">Binds 1 Mg(2+) ion per monomer.</text>
</comment>
<comment type="pathway">
    <text evidence="1">Purine metabolism; 3',5'-cyclic di-GMP biosynthesis.</text>
</comment>
<comment type="subunit">
    <text evidence="1">Homodimer.</text>
</comment>
<comment type="interaction">
    <interactant intactId="EBI-552525">
        <id>P76236</id>
    </interactant>
    <interactant intactId="EBI-369221">
        <id>P0A6Z3</id>
        <label>htpG</label>
    </interactant>
    <organismsDiffer>false</organismsDiffer>
    <experiments>3</experiments>
</comment>
<comment type="subcellular location">
    <subcellularLocation>
        <location evidence="4">Cell inner membrane</location>
        <topology evidence="2">Multi-pass membrane protein</topology>
    </subcellularLocation>
</comment>
<comment type="induction">
    <text evidence="5">Induced by 0.3M NaCl in an RpoS-dependent fashion.</text>
</comment>
<comment type="disruption phenotype">
    <text evidence="6">Deletion of the gene increases swimming motility and early biofilm formation.</text>
</comment>
<comment type="caution">
    <text evidence="9">Has a EGEVF motif instead of the conserved GG[D/E]EF motif characteristic of active diguanylate cyclases, suggesting that CdgI may be inactive. However, site-directed mutagenesis shows that it is probably a functional diguanylate cyclase.</text>
</comment>
<feature type="chain" id="PRO_0000169015" description="Probable diguanylate cyclase CdgI">
    <location>
        <begin position="1"/>
        <end position="491"/>
    </location>
</feature>
<feature type="topological domain" description="Cytoplasmic" evidence="8">
    <location>
        <begin position="1"/>
        <end position="54"/>
    </location>
</feature>
<feature type="transmembrane region" description="Helical" evidence="2">
    <location>
        <begin position="55"/>
        <end position="75"/>
    </location>
</feature>
<feature type="topological domain" description="Periplasmic" evidence="8">
    <location>
        <begin position="76"/>
        <end position="89"/>
    </location>
</feature>
<feature type="transmembrane region" description="Helical" evidence="2">
    <location>
        <begin position="90"/>
        <end position="110"/>
    </location>
</feature>
<feature type="topological domain" description="Cytoplasmic" evidence="8">
    <location>
        <begin position="111"/>
        <end position="121"/>
    </location>
</feature>
<feature type="transmembrane region" description="Helical" evidence="2">
    <location>
        <begin position="122"/>
        <end position="142"/>
    </location>
</feature>
<feature type="topological domain" description="Periplasmic" evidence="8">
    <location>
        <begin position="143"/>
        <end position="158"/>
    </location>
</feature>
<feature type="transmembrane region" description="Helical" evidence="2">
    <location>
        <begin position="159"/>
        <end position="179"/>
    </location>
</feature>
<feature type="topological domain" description="Cytoplasmic" evidence="8">
    <location>
        <begin position="180"/>
        <end position="193"/>
    </location>
</feature>
<feature type="transmembrane region" description="Helical" evidence="2">
    <location>
        <begin position="194"/>
        <end position="214"/>
    </location>
</feature>
<feature type="topological domain" description="Periplasmic" evidence="8">
    <location>
        <begin position="215"/>
        <end position="236"/>
    </location>
</feature>
<feature type="transmembrane region" description="Helical" evidence="2">
    <location>
        <begin position="237"/>
        <end position="257"/>
    </location>
</feature>
<feature type="topological domain" description="Cytoplasmic" evidence="8">
    <location>
        <begin position="258"/>
        <end position="265"/>
    </location>
</feature>
<feature type="transmembrane region" description="Helical" evidence="2">
    <location>
        <begin position="266"/>
        <end position="286"/>
    </location>
</feature>
<feature type="topological domain" description="Periplasmic" evidence="8">
    <location>
        <begin position="287"/>
        <end position="293"/>
    </location>
</feature>
<feature type="transmembrane region" description="Helical" evidence="2">
    <location>
        <begin position="294"/>
        <end position="314"/>
    </location>
</feature>
<feature type="topological domain" description="Cytoplasmic" evidence="4">
    <location>
        <begin position="315"/>
        <end position="491"/>
    </location>
</feature>
<feature type="domain" description="GGDEF" evidence="3">
    <location>
        <begin position="356"/>
        <end position="491"/>
    </location>
</feature>
<feature type="active site" description="Proton acceptor" evidence="2">
    <location>
        <position position="407"/>
    </location>
</feature>
<feature type="binding site" evidence="1">
    <location>
        <position position="364"/>
    </location>
    <ligand>
        <name>Mg(2+)</name>
        <dbReference type="ChEBI" id="CHEBI:18420"/>
    </ligand>
</feature>
<feature type="binding site" evidence="1">
    <location>
        <position position="365"/>
    </location>
    <ligand>
        <name>Mg(2+)</name>
        <dbReference type="ChEBI" id="CHEBI:18420"/>
    </ligand>
</feature>
<feature type="binding site" evidence="1">
    <location>
        <position position="372"/>
    </location>
    <ligand>
        <name>substrate</name>
    </ligand>
</feature>
<feature type="binding site" evidence="1">
    <location>
        <position position="377"/>
    </location>
    <ligand>
        <name>substrate</name>
    </ligand>
</feature>
<feature type="binding site" evidence="1">
    <location>
        <position position="381"/>
    </location>
    <ligand>
        <name>substrate</name>
    </ligand>
</feature>
<feature type="binding site" evidence="1">
    <location>
        <position position="407"/>
    </location>
    <ligand>
        <name>Mg(2+)</name>
        <dbReference type="ChEBI" id="CHEBI:18420"/>
    </ligand>
</feature>
<feature type="binding site" evidence="1">
    <location>
        <position position="427"/>
    </location>
    <ligand>
        <name>substrate</name>
    </ligand>
</feature>
<feature type="site" description="Transition state stabilizer" evidence="2">
    <location>
        <position position="369"/>
    </location>
</feature>
<feature type="mutagenesis site" description="Abolishes impact on swimming motility." evidence="6">
    <original>E</original>
    <variation>A</variation>
    <location>
        <position position="407"/>
    </location>
</feature>
<name>CDGI_ECOLI</name>
<dbReference type="EC" id="2.7.7.65" evidence="1"/>
<dbReference type="EMBL" id="U00096">
    <property type="protein sequence ID" value="AAC74855.1"/>
    <property type="molecule type" value="Genomic_DNA"/>
</dbReference>
<dbReference type="EMBL" id="AP009048">
    <property type="protein sequence ID" value="BAA15586.1"/>
    <property type="molecule type" value="Genomic_DNA"/>
</dbReference>
<dbReference type="PIR" id="A64939">
    <property type="entry name" value="A64939"/>
</dbReference>
<dbReference type="RefSeq" id="NP_416299.1">
    <property type="nucleotide sequence ID" value="NC_000913.3"/>
</dbReference>
<dbReference type="RefSeq" id="WP_000616433.1">
    <property type="nucleotide sequence ID" value="NZ_STEB01000009.1"/>
</dbReference>
<dbReference type="SMR" id="P76236"/>
<dbReference type="BioGRID" id="4260314">
    <property type="interactions" value="18"/>
</dbReference>
<dbReference type="BioGRID" id="850723">
    <property type="interactions" value="1"/>
</dbReference>
<dbReference type="DIP" id="DIP-11788N"/>
<dbReference type="FunCoup" id="P76236">
    <property type="interactions" value="102"/>
</dbReference>
<dbReference type="IntAct" id="P76236">
    <property type="interactions" value="2"/>
</dbReference>
<dbReference type="STRING" id="511145.b1785"/>
<dbReference type="PaxDb" id="511145-b1785"/>
<dbReference type="EnsemblBacteria" id="AAC74855">
    <property type="protein sequence ID" value="AAC74855"/>
    <property type="gene ID" value="b1785"/>
</dbReference>
<dbReference type="GeneID" id="946366"/>
<dbReference type="KEGG" id="ecj:JW1774"/>
<dbReference type="KEGG" id="eco:b1785"/>
<dbReference type="PATRIC" id="fig|511145.12.peg.1858"/>
<dbReference type="EchoBASE" id="EB3268"/>
<dbReference type="eggNOG" id="COG2199">
    <property type="taxonomic scope" value="Bacteria"/>
</dbReference>
<dbReference type="HOGENOM" id="CLU_000445_11_31_6"/>
<dbReference type="InParanoid" id="P76236"/>
<dbReference type="OMA" id="VCVLVWE"/>
<dbReference type="OrthoDB" id="9812260at2"/>
<dbReference type="BioCyc" id="EcoCyc:G6971-MONOMER"/>
<dbReference type="UniPathway" id="UPA00599"/>
<dbReference type="PRO" id="PR:P76236"/>
<dbReference type="Proteomes" id="UP000000625">
    <property type="component" value="Chromosome"/>
</dbReference>
<dbReference type="GO" id="GO:0005886">
    <property type="term" value="C:plasma membrane"/>
    <property type="evidence" value="ECO:0000314"/>
    <property type="project" value="EcoCyc"/>
</dbReference>
<dbReference type="GO" id="GO:0052621">
    <property type="term" value="F:diguanylate cyclase activity"/>
    <property type="evidence" value="ECO:0000318"/>
    <property type="project" value="GO_Central"/>
</dbReference>
<dbReference type="GO" id="GO:0005525">
    <property type="term" value="F:GTP binding"/>
    <property type="evidence" value="ECO:0007669"/>
    <property type="project" value="UniProtKB-KW"/>
</dbReference>
<dbReference type="GO" id="GO:0046872">
    <property type="term" value="F:metal ion binding"/>
    <property type="evidence" value="ECO:0007669"/>
    <property type="project" value="UniProtKB-KW"/>
</dbReference>
<dbReference type="GO" id="GO:0043709">
    <property type="term" value="P:cell adhesion involved in single-species biofilm formation"/>
    <property type="evidence" value="ECO:0000318"/>
    <property type="project" value="GO_Central"/>
</dbReference>
<dbReference type="GO" id="GO:1902201">
    <property type="term" value="P:negative regulation of bacterial-type flagellum-dependent cell motility"/>
    <property type="evidence" value="ECO:0000315"/>
    <property type="project" value="EcoCyc"/>
</dbReference>
<dbReference type="CDD" id="cd01949">
    <property type="entry name" value="GGDEF"/>
    <property type="match status" value="1"/>
</dbReference>
<dbReference type="FunFam" id="3.30.70.270:FF:000036">
    <property type="entry name" value="Diguanylate cyclase domain-containing protein"/>
    <property type="match status" value="1"/>
</dbReference>
<dbReference type="Gene3D" id="3.30.70.270">
    <property type="match status" value="1"/>
</dbReference>
<dbReference type="InterPro" id="IPR050469">
    <property type="entry name" value="Diguanylate_Cyclase"/>
</dbReference>
<dbReference type="InterPro" id="IPR000160">
    <property type="entry name" value="GGDEF_dom"/>
</dbReference>
<dbReference type="InterPro" id="IPR033424">
    <property type="entry name" value="MASE4"/>
</dbReference>
<dbReference type="InterPro" id="IPR029787">
    <property type="entry name" value="Nucleotide_cyclase"/>
</dbReference>
<dbReference type="InterPro" id="IPR043128">
    <property type="entry name" value="Rev_trsase/Diguanyl_cyclase"/>
</dbReference>
<dbReference type="NCBIfam" id="TIGR00254">
    <property type="entry name" value="GGDEF"/>
    <property type="match status" value="1"/>
</dbReference>
<dbReference type="PANTHER" id="PTHR45138:SF9">
    <property type="entry name" value="DIGUANYLATE CYCLASE DGCM-RELATED"/>
    <property type="match status" value="1"/>
</dbReference>
<dbReference type="PANTHER" id="PTHR45138">
    <property type="entry name" value="REGULATORY COMPONENTS OF SENSORY TRANSDUCTION SYSTEM"/>
    <property type="match status" value="1"/>
</dbReference>
<dbReference type="Pfam" id="PF00990">
    <property type="entry name" value="GGDEF"/>
    <property type="match status" value="1"/>
</dbReference>
<dbReference type="Pfam" id="PF17158">
    <property type="entry name" value="MASE4"/>
    <property type="match status" value="1"/>
</dbReference>
<dbReference type="SMART" id="SM00267">
    <property type="entry name" value="GGDEF"/>
    <property type="match status" value="1"/>
</dbReference>
<dbReference type="SUPFAM" id="SSF55073">
    <property type="entry name" value="Nucleotide cyclase"/>
    <property type="match status" value="1"/>
</dbReference>
<dbReference type="PROSITE" id="PS50887">
    <property type="entry name" value="GGDEF"/>
    <property type="match status" value="1"/>
</dbReference>
<organism>
    <name type="scientific">Escherichia coli (strain K12)</name>
    <dbReference type="NCBI Taxonomy" id="83333"/>
    <lineage>
        <taxon>Bacteria</taxon>
        <taxon>Pseudomonadati</taxon>
        <taxon>Pseudomonadota</taxon>
        <taxon>Gammaproteobacteria</taxon>
        <taxon>Enterobacterales</taxon>
        <taxon>Enterobacteriaceae</taxon>
        <taxon>Escherichia</taxon>
    </lineage>
</organism>